<comment type="function">
    <text evidence="4">May trigger the phosphorylation of FTSZ2-1 and FTSZ2-2.</text>
</comment>
<comment type="catalytic activity">
    <reaction evidence="1">
        <text>(2R)-3-phosphoglycerate + ATP = (2R)-3-phospho-glyceroyl phosphate + ADP</text>
        <dbReference type="Rhea" id="RHEA:14801"/>
        <dbReference type="ChEBI" id="CHEBI:30616"/>
        <dbReference type="ChEBI" id="CHEBI:57604"/>
        <dbReference type="ChEBI" id="CHEBI:58272"/>
        <dbReference type="ChEBI" id="CHEBI:456216"/>
        <dbReference type="EC" id="2.7.2.3"/>
    </reaction>
</comment>
<comment type="cofactor">
    <cofactor evidence="1">
        <name>Mg(2+)</name>
        <dbReference type="ChEBI" id="CHEBI:18420"/>
    </cofactor>
</comment>
<comment type="pathway">
    <text evidence="6">Carbohydrate biosynthesis; Calvin cycle.</text>
</comment>
<comment type="subunit">
    <text evidence="1 4">Monomer (By similarity). Binds to FTSZ2-1 and FTSZ2-2 (PubMed:22823492).</text>
</comment>
<comment type="subcellular location">
    <subcellularLocation>
        <location evidence="3">Plastid</location>
        <location evidence="3">Chloroplast</location>
    </subcellularLocation>
</comment>
<comment type="similarity">
    <text evidence="6">Belongs to the phosphoglycerate kinase family.</text>
</comment>
<feature type="transit peptide" description="Chloroplast" evidence="3">
    <location>
        <begin position="1"/>
        <end position="75"/>
    </location>
</feature>
<feature type="chain" id="PRO_0000407930" description="Phosphoglycerate kinase 1, chloroplastic">
    <location>
        <begin position="76"/>
        <end position="481"/>
    </location>
</feature>
<feature type="binding site" evidence="1">
    <location>
        <position position="99"/>
    </location>
    <ligand>
        <name>(2R)-3-phosphoglycerate</name>
        <dbReference type="ChEBI" id="CHEBI:58272"/>
    </ligand>
</feature>
<feature type="binding site" evidence="2">
    <location>
        <position position="100"/>
    </location>
    <ligand>
        <name>(2R)-3-phosphoglycerate</name>
        <dbReference type="ChEBI" id="CHEBI:58272"/>
    </ligand>
</feature>
<feature type="binding site" evidence="2">
    <location>
        <position position="102"/>
    </location>
    <ligand>
        <name>(2R)-3-phosphoglycerate</name>
        <dbReference type="ChEBI" id="CHEBI:58272"/>
    </ligand>
</feature>
<feature type="binding site" evidence="2">
    <location>
        <position position="116"/>
    </location>
    <ligand>
        <name>(2R)-3-phosphoglycerate</name>
        <dbReference type="ChEBI" id="CHEBI:58272"/>
    </ligand>
</feature>
<feature type="binding site" evidence="1">
    <location>
        <position position="138"/>
    </location>
    <ligand>
        <name>(2R)-3-phosphoglycerate</name>
        <dbReference type="ChEBI" id="CHEBI:58272"/>
    </ligand>
</feature>
<feature type="binding site" evidence="2">
    <location>
        <position position="139"/>
    </location>
    <ligand>
        <name>(2R)-3-phosphoglycerate</name>
        <dbReference type="ChEBI" id="CHEBI:58272"/>
    </ligand>
</feature>
<feature type="binding site" evidence="1">
    <location>
        <position position="141"/>
    </location>
    <ligand>
        <name>(2R)-3-phosphoglycerate</name>
        <dbReference type="ChEBI" id="CHEBI:58272"/>
    </ligand>
</feature>
<feature type="binding site" evidence="2">
    <location>
        <position position="142"/>
    </location>
    <ligand>
        <name>(2R)-3-phosphoglycerate</name>
        <dbReference type="ChEBI" id="CHEBI:58272"/>
    </ligand>
</feature>
<feature type="binding site" evidence="2">
    <location>
        <position position="197"/>
    </location>
    <ligand>
        <name>(2R)-3-phosphoglycerate</name>
        <dbReference type="ChEBI" id="CHEBI:58272"/>
    </ligand>
</feature>
<feature type="binding site" evidence="1">
    <location>
        <position position="229"/>
    </location>
    <ligand>
        <name>(2R)-3-phosphoglycerate</name>
        <dbReference type="ChEBI" id="CHEBI:58272"/>
    </ligand>
</feature>
<feature type="binding site" evidence="2">
    <location>
        <position position="230"/>
    </location>
    <ligand>
        <name>(2R)-3-phosphoglycerate</name>
        <dbReference type="ChEBI" id="CHEBI:58272"/>
    </ligand>
</feature>
<feature type="binding site" evidence="1">
    <location>
        <position position="275"/>
    </location>
    <ligand>
        <name>ADP</name>
        <dbReference type="ChEBI" id="CHEBI:456216"/>
    </ligand>
</feature>
<feature type="binding site" evidence="1">
    <location>
        <position position="275"/>
    </location>
    <ligand>
        <name>CDP</name>
        <dbReference type="ChEBI" id="CHEBI:58069"/>
    </ligand>
</feature>
<feature type="binding site" evidence="2">
    <location>
        <position position="277"/>
    </location>
    <ligand>
        <name>AMP</name>
        <dbReference type="ChEBI" id="CHEBI:456215"/>
    </ligand>
</feature>
<feature type="binding site" evidence="2">
    <location>
        <position position="281"/>
    </location>
    <ligand>
        <name>AMP</name>
        <dbReference type="ChEBI" id="CHEBI:456215"/>
    </ligand>
</feature>
<feature type="binding site" evidence="1">
    <location>
        <position position="281"/>
    </location>
    <ligand>
        <name>ATP</name>
        <dbReference type="ChEBI" id="CHEBI:30616"/>
    </ligand>
</feature>
<feature type="binding site" evidence="1">
    <location>
        <position position="299"/>
    </location>
    <ligand>
        <name>ADP</name>
        <dbReference type="ChEBI" id="CHEBI:456216"/>
    </ligand>
</feature>
<feature type="binding site" evidence="1">
    <location>
        <position position="299"/>
    </location>
    <ligand>
        <name>CDP</name>
        <dbReference type="ChEBI" id="CHEBI:58069"/>
    </ligand>
</feature>
<feature type="binding site" evidence="2">
    <location>
        <position position="300"/>
    </location>
    <ligand>
        <name>AMP</name>
        <dbReference type="ChEBI" id="CHEBI:456215"/>
    </ligand>
</feature>
<feature type="binding site" evidence="2">
    <location>
        <position position="300"/>
    </location>
    <ligand>
        <name>ATP</name>
        <dbReference type="ChEBI" id="CHEBI:30616"/>
    </ligand>
</feature>
<feature type="binding site" evidence="2">
    <location>
        <position position="372"/>
    </location>
    <ligand>
        <name>AMP</name>
        <dbReference type="ChEBI" id="CHEBI:456215"/>
    </ligand>
</feature>
<feature type="binding site" evidence="1">
    <location>
        <position position="372"/>
    </location>
    <ligand>
        <name>ATP</name>
        <dbReference type="ChEBI" id="CHEBI:30616"/>
    </ligand>
</feature>
<feature type="binding site" evidence="1">
    <location>
        <position position="397"/>
    </location>
    <ligand>
        <name>CDP</name>
        <dbReference type="ChEBI" id="CHEBI:58069"/>
    </ligand>
</feature>
<feature type="binding site" evidence="1">
    <location>
        <position position="402"/>
    </location>
    <ligand>
        <name>ADP</name>
        <dbReference type="ChEBI" id="CHEBI:456216"/>
    </ligand>
</feature>
<feature type="binding site" evidence="1">
    <location>
        <position position="402"/>
    </location>
    <ligand>
        <name>CDP</name>
        <dbReference type="ChEBI" id="CHEBI:58069"/>
    </ligand>
</feature>
<feature type="binding site" evidence="2">
    <location>
        <position position="403"/>
    </location>
    <ligand>
        <name>AMP</name>
        <dbReference type="ChEBI" id="CHEBI:456215"/>
    </ligand>
</feature>
<feature type="binding site" evidence="1">
    <location>
        <position position="403"/>
    </location>
    <ligand>
        <name>ATP</name>
        <dbReference type="ChEBI" id="CHEBI:30616"/>
    </ligand>
</feature>
<feature type="binding site" evidence="2">
    <location>
        <position position="434"/>
    </location>
    <ligand>
        <name>ATP</name>
        <dbReference type="ChEBI" id="CHEBI:30616"/>
    </ligand>
</feature>
<feature type="binding site" evidence="2">
    <location>
        <position position="434"/>
    </location>
    <ligand>
        <name>Mg(2+)</name>
        <dbReference type="ChEBI" id="CHEBI:18420"/>
    </ligand>
</feature>
<feature type="binding site" evidence="2">
    <location>
        <position position="435"/>
    </location>
    <ligand>
        <name>ATP</name>
        <dbReference type="ChEBI" id="CHEBI:30616"/>
    </ligand>
</feature>
<feature type="modified residue" description="Phosphoserine" evidence="9">
    <location>
        <position position="81"/>
    </location>
</feature>
<organism>
    <name type="scientific">Arabidopsis thaliana</name>
    <name type="common">Mouse-ear cress</name>
    <dbReference type="NCBI Taxonomy" id="3702"/>
    <lineage>
        <taxon>Eukaryota</taxon>
        <taxon>Viridiplantae</taxon>
        <taxon>Streptophyta</taxon>
        <taxon>Embryophyta</taxon>
        <taxon>Tracheophyta</taxon>
        <taxon>Spermatophyta</taxon>
        <taxon>Magnoliopsida</taxon>
        <taxon>eudicotyledons</taxon>
        <taxon>Gunneridae</taxon>
        <taxon>Pentapetalae</taxon>
        <taxon>rosids</taxon>
        <taxon>malvids</taxon>
        <taxon>Brassicales</taxon>
        <taxon>Brassicaceae</taxon>
        <taxon>Camelineae</taxon>
        <taxon>Arabidopsis</taxon>
    </lineage>
</organism>
<sequence length="481" mass="50112">MASAAASSAFSLLKSTGAVASSAGTRARASLLPIPSTSVSARPLGFSATLDSRRFSLHVASKVESVRGKGSRGVVSMAKKSVGDLTSADLKGKKVFVRADLNVPLDDNQTITDDTRIRAAIPTIKYLIENGAKVILSTHLGRPKGVTPKFSLAPLVPRLSELLGIEVTKADDCIGPEVESLVASLPEGGVLLLENVRFYKEEEKNDPEFAKKLASLADLYVNDAFGTAHRAHASTEGVTKFLKPSVAGFLLQKELDYLVGAVSNPKRPFAAIVGGSKVSSKIGVIESLLEKCDILLLGGGMIFTFYKAQGLSVGSSLVEEDKLELATELLAKAKAKGVSLLLPTDVVVADKFAPDANSKIVPASGIEDGWMGLDIGPDSIKTFNEALDTTQTVIWNGPMGVFEMEKFAAGTEAIANKLAELSEKGVTTIIGGGDSVAAVEKVGVAGVMSHISTGGGASLELLEGKVLPGVIALDEAIPVTV</sequence>
<proteinExistence type="evidence at protein level"/>
<protein>
    <recommendedName>
        <fullName evidence="5">Phosphoglycerate kinase 1, chloroplastic</fullName>
        <ecNumber evidence="1">2.7.2.3</ecNumber>
    </recommendedName>
</protein>
<evidence type="ECO:0000250" key="1">
    <source>
        <dbReference type="UniProtKB" id="P00558"/>
    </source>
</evidence>
<evidence type="ECO:0000250" key="2">
    <source>
        <dbReference type="UniProtKB" id="Q7SIB7"/>
    </source>
</evidence>
<evidence type="ECO:0000255" key="3"/>
<evidence type="ECO:0000269" key="4">
    <source>
    </source>
</evidence>
<evidence type="ECO:0000303" key="5">
    <source ref="1"/>
</evidence>
<evidence type="ECO:0000305" key="6"/>
<evidence type="ECO:0000312" key="7">
    <source>
        <dbReference type="Araport" id="AT3G12780"/>
    </source>
</evidence>
<evidence type="ECO:0000312" key="8">
    <source>
        <dbReference type="EMBL" id="BAB02423.1"/>
    </source>
</evidence>
<evidence type="ECO:0007744" key="9">
    <source>
    </source>
</evidence>
<keyword id="KW-0067">ATP-binding</keyword>
<keyword id="KW-0113">Calvin cycle</keyword>
<keyword id="KW-0150">Chloroplast</keyword>
<keyword id="KW-0418">Kinase</keyword>
<keyword id="KW-0460">Magnesium</keyword>
<keyword id="KW-0479">Metal-binding</keyword>
<keyword id="KW-0547">Nucleotide-binding</keyword>
<keyword id="KW-0597">Phosphoprotein</keyword>
<keyword id="KW-0934">Plastid</keyword>
<keyword id="KW-1185">Reference proteome</keyword>
<keyword id="KW-0808">Transferase</keyword>
<keyword id="KW-0809">Transit peptide</keyword>
<name>PGKH1_ARATH</name>
<dbReference type="EC" id="2.7.2.3" evidence="1"/>
<dbReference type="EMBL" id="AF247558">
    <property type="protein sequence ID" value="AAF70258.1"/>
    <property type="molecule type" value="mRNA"/>
</dbReference>
<dbReference type="EMBL" id="AB024033">
    <property type="protein sequence ID" value="BAB02423.1"/>
    <property type="molecule type" value="Genomic_DNA"/>
</dbReference>
<dbReference type="EMBL" id="CP002686">
    <property type="protein sequence ID" value="AEE75246.1"/>
    <property type="molecule type" value="Genomic_DNA"/>
</dbReference>
<dbReference type="EMBL" id="AF360234">
    <property type="protein sequence ID" value="AAK25944.1"/>
    <property type="molecule type" value="mRNA"/>
</dbReference>
<dbReference type="EMBL" id="AF428418">
    <property type="protein sequence ID" value="AAL16186.1"/>
    <property type="molecule type" value="mRNA"/>
</dbReference>
<dbReference type="EMBL" id="AY045623">
    <property type="protein sequence ID" value="AAK73981.1"/>
    <property type="molecule type" value="mRNA"/>
</dbReference>
<dbReference type="EMBL" id="AY059841">
    <property type="protein sequence ID" value="AAL24323.1"/>
    <property type="molecule type" value="mRNA"/>
</dbReference>
<dbReference type="EMBL" id="AY062953">
    <property type="protein sequence ID" value="AAL33785.1"/>
    <property type="molecule type" value="mRNA"/>
</dbReference>
<dbReference type="EMBL" id="AY093998">
    <property type="protein sequence ID" value="AAM16259.1"/>
    <property type="molecule type" value="mRNA"/>
</dbReference>
<dbReference type="EMBL" id="AY114638">
    <property type="protein sequence ID" value="AAM47957.1"/>
    <property type="molecule type" value="mRNA"/>
</dbReference>
<dbReference type="EMBL" id="AY126991">
    <property type="protein sequence ID" value="AAM83218.1"/>
    <property type="molecule type" value="mRNA"/>
</dbReference>
<dbReference type="EMBL" id="AK227225">
    <property type="protein sequence ID" value="BAE99262.1"/>
    <property type="molecule type" value="mRNA"/>
</dbReference>
<dbReference type="EMBL" id="AK316922">
    <property type="protein sequence ID" value="BAH19627.1"/>
    <property type="molecule type" value="mRNA"/>
</dbReference>
<dbReference type="EMBL" id="U37701">
    <property type="protein sequence ID" value="AAB60303.1"/>
    <property type="molecule type" value="mRNA"/>
</dbReference>
<dbReference type="PIR" id="S71368">
    <property type="entry name" value="S71368"/>
</dbReference>
<dbReference type="RefSeq" id="NP_187884.1">
    <property type="nucleotide sequence ID" value="NM_112114.4"/>
</dbReference>
<dbReference type="SMR" id="Q9LD57"/>
<dbReference type="BioGRID" id="5795">
    <property type="interactions" value="11"/>
</dbReference>
<dbReference type="FunCoup" id="Q9LD57">
    <property type="interactions" value="2869"/>
</dbReference>
<dbReference type="IntAct" id="Q9LD57">
    <property type="interactions" value="1"/>
</dbReference>
<dbReference type="MINT" id="Q9LD57"/>
<dbReference type="STRING" id="3702.Q9LD57"/>
<dbReference type="iPTMnet" id="Q9LD57"/>
<dbReference type="MetOSite" id="Q9LD57"/>
<dbReference type="PaxDb" id="3702-AT3G12780.1"/>
<dbReference type="ProteomicsDB" id="235116"/>
<dbReference type="EnsemblPlants" id="AT3G12780.1">
    <property type="protein sequence ID" value="AT3G12780.1"/>
    <property type="gene ID" value="AT3G12780"/>
</dbReference>
<dbReference type="GeneID" id="820461"/>
<dbReference type="Gramene" id="AT3G12780.1">
    <property type="protein sequence ID" value="AT3G12780.1"/>
    <property type="gene ID" value="AT3G12780"/>
</dbReference>
<dbReference type="KEGG" id="ath:AT3G12780"/>
<dbReference type="Araport" id="AT3G12780"/>
<dbReference type="TAIR" id="AT3G12780">
    <property type="gene designation" value="PGK1"/>
</dbReference>
<dbReference type="eggNOG" id="KOG1367">
    <property type="taxonomic scope" value="Eukaryota"/>
</dbReference>
<dbReference type="HOGENOM" id="CLU_025427_0_2_1"/>
<dbReference type="InParanoid" id="Q9LD57"/>
<dbReference type="OMA" id="SCAKEFK"/>
<dbReference type="OrthoDB" id="275353at2759"/>
<dbReference type="PhylomeDB" id="Q9LD57"/>
<dbReference type="BioCyc" id="ARA:AT3G12780-MONOMER"/>
<dbReference type="BRENDA" id="2.7.2.3">
    <property type="organism ID" value="399"/>
</dbReference>
<dbReference type="UniPathway" id="UPA00116"/>
<dbReference type="CD-CODE" id="4299E36E">
    <property type="entry name" value="Nucleolus"/>
</dbReference>
<dbReference type="PRO" id="PR:Q9LD57"/>
<dbReference type="Proteomes" id="UP000006548">
    <property type="component" value="Chromosome 3"/>
</dbReference>
<dbReference type="ExpressionAtlas" id="Q9LD57">
    <property type="expression patterns" value="baseline and differential"/>
</dbReference>
<dbReference type="GO" id="GO:0048046">
    <property type="term" value="C:apoplast"/>
    <property type="evidence" value="ECO:0007005"/>
    <property type="project" value="TAIR"/>
</dbReference>
<dbReference type="GO" id="GO:0009507">
    <property type="term" value="C:chloroplast"/>
    <property type="evidence" value="ECO:0000314"/>
    <property type="project" value="TAIR"/>
</dbReference>
<dbReference type="GO" id="GO:0009941">
    <property type="term" value="C:chloroplast envelope"/>
    <property type="evidence" value="ECO:0007005"/>
    <property type="project" value="TAIR"/>
</dbReference>
<dbReference type="GO" id="GO:0009570">
    <property type="term" value="C:chloroplast stroma"/>
    <property type="evidence" value="ECO:0007005"/>
    <property type="project" value="TAIR"/>
</dbReference>
<dbReference type="GO" id="GO:0005737">
    <property type="term" value="C:cytoplasm"/>
    <property type="evidence" value="ECO:0007005"/>
    <property type="project" value="TAIR"/>
</dbReference>
<dbReference type="GO" id="GO:0005829">
    <property type="term" value="C:cytosol"/>
    <property type="evidence" value="ECO:0007005"/>
    <property type="project" value="TAIR"/>
</dbReference>
<dbReference type="GO" id="GO:0016020">
    <property type="term" value="C:membrane"/>
    <property type="evidence" value="ECO:0007669"/>
    <property type="project" value="GOC"/>
</dbReference>
<dbReference type="GO" id="GO:0005739">
    <property type="term" value="C:mitochondrion"/>
    <property type="evidence" value="ECO:0007005"/>
    <property type="project" value="TAIR"/>
</dbReference>
<dbReference type="GO" id="GO:0005634">
    <property type="term" value="C:nucleus"/>
    <property type="evidence" value="ECO:0007005"/>
    <property type="project" value="TAIR"/>
</dbReference>
<dbReference type="GO" id="GO:0009505">
    <property type="term" value="C:plant-type cell wall"/>
    <property type="evidence" value="ECO:0007005"/>
    <property type="project" value="TAIR"/>
</dbReference>
<dbReference type="GO" id="GO:0010319">
    <property type="term" value="C:stromule"/>
    <property type="evidence" value="ECO:0000314"/>
    <property type="project" value="TAIR"/>
</dbReference>
<dbReference type="GO" id="GO:0009579">
    <property type="term" value="C:thylakoid"/>
    <property type="evidence" value="ECO:0007005"/>
    <property type="project" value="TAIR"/>
</dbReference>
<dbReference type="GO" id="GO:0005524">
    <property type="term" value="F:ATP binding"/>
    <property type="evidence" value="ECO:0007669"/>
    <property type="project" value="UniProtKB-KW"/>
</dbReference>
<dbReference type="GO" id="GO:0046872">
    <property type="term" value="F:metal ion binding"/>
    <property type="evidence" value="ECO:0007669"/>
    <property type="project" value="UniProtKB-KW"/>
</dbReference>
<dbReference type="GO" id="GO:0003729">
    <property type="term" value="F:mRNA binding"/>
    <property type="evidence" value="ECO:0000314"/>
    <property type="project" value="TAIR"/>
</dbReference>
<dbReference type="GO" id="GO:0004618">
    <property type="term" value="F:phosphoglycerate kinase activity"/>
    <property type="evidence" value="ECO:0000314"/>
    <property type="project" value="TAIR"/>
</dbReference>
<dbReference type="GO" id="GO:0004672">
    <property type="term" value="F:protein kinase activity"/>
    <property type="evidence" value="ECO:0000314"/>
    <property type="project" value="TAIR"/>
</dbReference>
<dbReference type="GO" id="GO:0019375">
    <property type="term" value="P:galactolipid biosynthetic process"/>
    <property type="evidence" value="ECO:0000316"/>
    <property type="project" value="TAIR"/>
</dbReference>
<dbReference type="GO" id="GO:0006096">
    <property type="term" value="P:glycolytic process"/>
    <property type="evidence" value="ECO:0007669"/>
    <property type="project" value="InterPro"/>
</dbReference>
<dbReference type="GO" id="GO:0019253">
    <property type="term" value="P:reductive pentose-phosphate cycle"/>
    <property type="evidence" value="ECO:0000315"/>
    <property type="project" value="TAIR"/>
</dbReference>
<dbReference type="GO" id="GO:0009409">
    <property type="term" value="P:response to cold"/>
    <property type="evidence" value="ECO:0000270"/>
    <property type="project" value="TAIR"/>
</dbReference>
<dbReference type="GO" id="GO:0010027">
    <property type="term" value="P:thylakoid membrane organization"/>
    <property type="evidence" value="ECO:0000316"/>
    <property type="project" value="TAIR"/>
</dbReference>
<dbReference type="CDD" id="cd00318">
    <property type="entry name" value="Phosphoglycerate_kinase"/>
    <property type="match status" value="1"/>
</dbReference>
<dbReference type="FunFam" id="3.40.50.1260:FF:000007">
    <property type="entry name" value="Phosphoglycerate kinase"/>
    <property type="match status" value="1"/>
</dbReference>
<dbReference type="FunFam" id="3.40.50.1260:FF:000014">
    <property type="entry name" value="Phosphoglycerate kinase"/>
    <property type="match status" value="1"/>
</dbReference>
<dbReference type="Gene3D" id="3.40.50.1260">
    <property type="entry name" value="Phosphoglycerate kinase, N-terminal domain"/>
    <property type="match status" value="3"/>
</dbReference>
<dbReference type="HAMAP" id="MF_00145">
    <property type="entry name" value="Phosphoglyc_kinase"/>
    <property type="match status" value="1"/>
</dbReference>
<dbReference type="InterPro" id="IPR001576">
    <property type="entry name" value="Phosphoglycerate_kinase"/>
</dbReference>
<dbReference type="InterPro" id="IPR015911">
    <property type="entry name" value="Phosphoglycerate_kinase_CS"/>
</dbReference>
<dbReference type="InterPro" id="IPR015824">
    <property type="entry name" value="Phosphoglycerate_kinase_N"/>
</dbReference>
<dbReference type="InterPro" id="IPR036043">
    <property type="entry name" value="Phosphoglycerate_kinase_sf"/>
</dbReference>
<dbReference type="PANTHER" id="PTHR11406">
    <property type="entry name" value="PHOSPHOGLYCERATE KINASE"/>
    <property type="match status" value="1"/>
</dbReference>
<dbReference type="PANTHER" id="PTHR11406:SF23">
    <property type="entry name" value="PHOSPHOGLYCERATE KINASE 1, CHLOROPLASTIC-RELATED"/>
    <property type="match status" value="1"/>
</dbReference>
<dbReference type="Pfam" id="PF00162">
    <property type="entry name" value="PGK"/>
    <property type="match status" value="1"/>
</dbReference>
<dbReference type="PIRSF" id="PIRSF000724">
    <property type="entry name" value="Pgk"/>
    <property type="match status" value="1"/>
</dbReference>
<dbReference type="PRINTS" id="PR00477">
    <property type="entry name" value="PHGLYCKINASE"/>
</dbReference>
<dbReference type="SUPFAM" id="SSF53748">
    <property type="entry name" value="Phosphoglycerate kinase"/>
    <property type="match status" value="1"/>
</dbReference>
<dbReference type="PROSITE" id="PS00111">
    <property type="entry name" value="PGLYCERATE_KINASE"/>
    <property type="match status" value="1"/>
</dbReference>
<reference key="1">
    <citation type="submission" date="2000-03" db="EMBL/GenBank/DDBJ databases">
        <title>Structure and regulation of nuclear genes encoding chloroplast and cytosolic phosphoglycerate kinase in Arabidopsis thaliana.</title>
        <authorList>
            <person name="Shih M.-C."/>
        </authorList>
    </citation>
    <scope>NUCLEOTIDE SEQUENCE [MRNA]</scope>
</reference>
<reference key="2">
    <citation type="journal article" date="2000" name="DNA Res.">
        <title>Structural analysis of Arabidopsis thaliana chromosome 3. I. Sequence features of the regions of 4,504,864 bp covered by sixty P1 and TAC clones.</title>
        <authorList>
            <person name="Sato S."/>
            <person name="Nakamura Y."/>
            <person name="Kaneko T."/>
            <person name="Katoh T."/>
            <person name="Asamizu E."/>
            <person name="Tabata S."/>
        </authorList>
    </citation>
    <scope>NUCLEOTIDE SEQUENCE [LARGE SCALE GENOMIC DNA]</scope>
    <source>
        <strain>cv. Columbia</strain>
    </source>
</reference>
<reference key="3">
    <citation type="journal article" date="2017" name="Plant J.">
        <title>Araport11: a complete reannotation of the Arabidopsis thaliana reference genome.</title>
        <authorList>
            <person name="Cheng C.Y."/>
            <person name="Krishnakumar V."/>
            <person name="Chan A.P."/>
            <person name="Thibaud-Nissen F."/>
            <person name="Schobel S."/>
            <person name="Town C.D."/>
        </authorList>
    </citation>
    <scope>GENOME REANNOTATION</scope>
    <source>
        <strain>cv. Columbia</strain>
    </source>
</reference>
<reference key="4">
    <citation type="journal article" date="2003" name="Science">
        <title>Empirical analysis of transcriptional activity in the Arabidopsis genome.</title>
        <authorList>
            <person name="Yamada K."/>
            <person name="Lim J."/>
            <person name="Dale J.M."/>
            <person name="Chen H."/>
            <person name="Shinn P."/>
            <person name="Palm C.J."/>
            <person name="Southwick A.M."/>
            <person name="Wu H.C."/>
            <person name="Kim C.J."/>
            <person name="Nguyen M."/>
            <person name="Pham P.K."/>
            <person name="Cheuk R.F."/>
            <person name="Karlin-Newmann G."/>
            <person name="Liu S.X."/>
            <person name="Lam B."/>
            <person name="Sakano H."/>
            <person name="Wu T."/>
            <person name="Yu G."/>
            <person name="Miranda M."/>
            <person name="Quach H.L."/>
            <person name="Tripp M."/>
            <person name="Chang C.H."/>
            <person name="Lee J.M."/>
            <person name="Toriumi M.J."/>
            <person name="Chan M.M."/>
            <person name="Tang C.C."/>
            <person name="Onodera C.S."/>
            <person name="Deng J.M."/>
            <person name="Akiyama K."/>
            <person name="Ansari Y."/>
            <person name="Arakawa T."/>
            <person name="Banh J."/>
            <person name="Banno F."/>
            <person name="Bowser L."/>
            <person name="Brooks S.Y."/>
            <person name="Carninci P."/>
            <person name="Chao Q."/>
            <person name="Choy N."/>
            <person name="Enju A."/>
            <person name="Goldsmith A.D."/>
            <person name="Gurjal M."/>
            <person name="Hansen N.F."/>
            <person name="Hayashizaki Y."/>
            <person name="Johnson-Hopson C."/>
            <person name="Hsuan V.W."/>
            <person name="Iida K."/>
            <person name="Karnes M."/>
            <person name="Khan S."/>
            <person name="Koesema E."/>
            <person name="Ishida J."/>
            <person name="Jiang P.X."/>
            <person name="Jones T."/>
            <person name="Kawai J."/>
            <person name="Kamiya A."/>
            <person name="Meyers C."/>
            <person name="Nakajima M."/>
            <person name="Narusaka M."/>
            <person name="Seki M."/>
            <person name="Sakurai T."/>
            <person name="Satou M."/>
            <person name="Tamse R."/>
            <person name="Vaysberg M."/>
            <person name="Wallender E.K."/>
            <person name="Wong C."/>
            <person name="Yamamura Y."/>
            <person name="Yuan S."/>
            <person name="Shinozaki K."/>
            <person name="Davis R.W."/>
            <person name="Theologis A."/>
            <person name="Ecker J.R."/>
        </authorList>
    </citation>
    <scope>NUCLEOTIDE SEQUENCE [LARGE SCALE MRNA]</scope>
    <source>
        <strain>cv. Columbia</strain>
    </source>
</reference>
<reference key="5">
    <citation type="submission" date="2006-07" db="EMBL/GenBank/DDBJ databases">
        <title>Large-scale analysis of RIKEN Arabidopsis full-length (RAFL) cDNAs.</title>
        <authorList>
            <person name="Totoki Y."/>
            <person name="Seki M."/>
            <person name="Ishida J."/>
            <person name="Nakajima M."/>
            <person name="Enju A."/>
            <person name="Kamiya A."/>
            <person name="Narusaka M."/>
            <person name="Shin-i T."/>
            <person name="Nakagawa M."/>
            <person name="Sakamoto N."/>
            <person name="Oishi K."/>
            <person name="Kohara Y."/>
            <person name="Kobayashi M."/>
            <person name="Toyoda A."/>
            <person name="Sakaki Y."/>
            <person name="Sakurai T."/>
            <person name="Iida K."/>
            <person name="Akiyama K."/>
            <person name="Satou M."/>
            <person name="Toyoda T."/>
            <person name="Konagaya A."/>
            <person name="Carninci P."/>
            <person name="Kawai J."/>
            <person name="Hayashizaki Y."/>
            <person name="Shinozaki K."/>
        </authorList>
    </citation>
    <scope>NUCLEOTIDE SEQUENCE [LARGE SCALE MRNA]</scope>
    <source>
        <strain>cv. Columbia</strain>
    </source>
</reference>
<reference key="6">
    <citation type="journal article" date="2009" name="DNA Res.">
        <title>Analysis of multiple occurrences of alternative splicing events in Arabidopsis thaliana using novel sequenced full-length cDNAs.</title>
        <authorList>
            <person name="Iida K."/>
            <person name="Fukami-Kobayashi K."/>
            <person name="Toyoda A."/>
            <person name="Sakaki Y."/>
            <person name="Kobayashi M."/>
            <person name="Seki M."/>
            <person name="Shinozaki K."/>
        </authorList>
    </citation>
    <scope>NUCLEOTIDE SEQUENCE [LARGE SCALE MRNA]</scope>
    <source>
        <strain>cv. Columbia</strain>
        <tissue>Rosette leaf</tissue>
    </source>
</reference>
<reference key="7">
    <citation type="journal article" date="1998" name="DNA Seq.">
        <title>Two phosphoglycerate kinase cDNAs from Arabidopsis thaliana.</title>
        <authorList>
            <person name="Loebler M."/>
        </authorList>
    </citation>
    <scope>NUCLEOTIDE SEQUENCE [MRNA] OF 83-481</scope>
    <source>
        <strain>cv. Columbia</strain>
        <tissue>Leaf</tissue>
    </source>
</reference>
<reference key="8">
    <citation type="journal article" date="2007" name="Mol. Cell. Proteomics">
        <title>Multidimensional protein identification technology (MudPIT) analysis of ubiquitinated proteins in plants.</title>
        <authorList>
            <person name="Maor R."/>
            <person name="Jones A."/>
            <person name="Nuehse T.S."/>
            <person name="Studholme D.J."/>
            <person name="Peck S.C."/>
            <person name="Shirasu K."/>
        </authorList>
    </citation>
    <scope>IDENTIFICATION BY MASS SPECTROMETRY [LARGE SCALE ANALYSIS]</scope>
    <source>
        <strain>cv. Landsberg erecta</strain>
    </source>
</reference>
<reference key="9">
    <citation type="journal article" date="2009" name="Plant Physiol.">
        <title>Large-scale Arabidopsis phosphoproteome profiling reveals novel chloroplast kinase substrates and phosphorylation networks.</title>
        <authorList>
            <person name="Reiland S."/>
            <person name="Messerli G."/>
            <person name="Baerenfaller K."/>
            <person name="Gerrits B."/>
            <person name="Endler A."/>
            <person name="Grossmann J."/>
            <person name="Gruissem W."/>
            <person name="Baginsky S."/>
        </authorList>
    </citation>
    <scope>PHOSPHORYLATION [LARGE SCALE ANALYSIS] AT SER-81</scope>
    <scope>IDENTIFICATION BY MASS SPECTROMETRY [LARGE SCALE ANALYSIS]</scope>
</reference>
<reference key="10">
    <citation type="journal article" date="2012" name="Biochem. J.">
        <title>In vivo phosphorylation of FtsZ2 in Arabidopsis thaliana.</title>
        <authorList>
            <person name="Gargano D."/>
            <person name="Maple-Groedem J."/>
            <person name="Moeller S.G."/>
        </authorList>
    </citation>
    <scope>FUNCTION</scope>
    <scope>INTERACTION WITH FTSZ2-1 AND FTSZ2-2</scope>
</reference>
<accession>Q9LD57</accession>
<gene>
    <name evidence="5" type="primary">PGK1</name>
    <name evidence="7" type="ordered locus">At3g12780</name>
    <name evidence="8" type="ORF">MBK21.15</name>
</gene>